<accession>Q99437</accession>
<accession>D3DPY5</accession>
<accession>Q6IB32</accession>
<dbReference type="EMBL" id="D89052">
    <property type="protein sequence ID" value="BAA13753.1"/>
    <property type="molecule type" value="mRNA"/>
</dbReference>
<dbReference type="EMBL" id="BT007151">
    <property type="protein sequence ID" value="AAP35815.1"/>
    <property type="molecule type" value="mRNA"/>
</dbReference>
<dbReference type="EMBL" id="CR456972">
    <property type="protein sequence ID" value="CAG33253.1"/>
    <property type="molecule type" value="mRNA"/>
</dbReference>
<dbReference type="EMBL" id="AL357079">
    <property type="status" value="NOT_ANNOTATED_CDS"/>
    <property type="molecule type" value="Genomic_DNA"/>
</dbReference>
<dbReference type="EMBL" id="CH471059">
    <property type="protein sequence ID" value="EAX07066.1"/>
    <property type="molecule type" value="Genomic_DNA"/>
</dbReference>
<dbReference type="EMBL" id="CH471059">
    <property type="protein sequence ID" value="EAX07067.1"/>
    <property type="molecule type" value="Genomic_DNA"/>
</dbReference>
<dbReference type="EMBL" id="CH471059">
    <property type="protein sequence ID" value="EAX07068.1"/>
    <property type="molecule type" value="Genomic_DNA"/>
</dbReference>
<dbReference type="EMBL" id="BC000423">
    <property type="protein sequence ID" value="AAH00423.1"/>
    <property type="molecule type" value="mRNA"/>
</dbReference>
<dbReference type="EMBL" id="BC005876">
    <property type="protein sequence ID" value="AAH05876.1"/>
    <property type="molecule type" value="mRNA"/>
</dbReference>
<dbReference type="CCDS" id="CCDS41315.1">
    <molecule id="Q99437-2"/>
</dbReference>
<dbReference type="CCDS" id="CCDS505.1">
    <molecule id="Q99437-1"/>
</dbReference>
<dbReference type="RefSeq" id="NP_001034546.1">
    <molecule id="Q99437-2"/>
    <property type="nucleotide sequence ID" value="NM_001039457.3"/>
</dbReference>
<dbReference type="RefSeq" id="NP_004038.1">
    <molecule id="Q99437-1"/>
    <property type="nucleotide sequence ID" value="NM_004047.5"/>
</dbReference>
<dbReference type="RefSeq" id="XP_047278606.1">
    <molecule id="Q99437-2"/>
    <property type="nucleotide sequence ID" value="XM_047422650.1"/>
</dbReference>
<dbReference type="RefSeq" id="XP_054193068.1">
    <molecule id="Q99437-2"/>
    <property type="nucleotide sequence ID" value="XM_054337093.1"/>
</dbReference>
<dbReference type="PDB" id="6WLW">
    <property type="method" value="EM"/>
    <property type="resolution" value="3.00 A"/>
    <property type="chains" value="0=1-205"/>
</dbReference>
<dbReference type="PDB" id="6WM2">
    <property type="method" value="EM"/>
    <property type="resolution" value="3.10 A"/>
    <property type="chains" value="0=1-205"/>
</dbReference>
<dbReference type="PDB" id="6WM3">
    <property type="method" value="EM"/>
    <property type="resolution" value="3.40 A"/>
    <property type="chains" value="0=1-205"/>
</dbReference>
<dbReference type="PDB" id="6WM4">
    <property type="method" value="EM"/>
    <property type="resolution" value="3.60 A"/>
    <property type="chains" value="0=1-205"/>
</dbReference>
<dbReference type="PDB" id="7U4T">
    <property type="method" value="EM"/>
    <property type="resolution" value="3.60 A"/>
    <property type="chains" value="0=1-205"/>
</dbReference>
<dbReference type="PDB" id="7UNF">
    <property type="method" value="EM"/>
    <property type="resolution" value="4.08 A"/>
    <property type="chains" value="1=1-205"/>
</dbReference>
<dbReference type="PDBsum" id="6WLW"/>
<dbReference type="PDBsum" id="6WM2"/>
<dbReference type="PDBsum" id="6WM3"/>
<dbReference type="PDBsum" id="6WM4"/>
<dbReference type="PDBsum" id="7U4T"/>
<dbReference type="PDBsum" id="7UNF"/>
<dbReference type="EMDB" id="EMD-21844"/>
<dbReference type="EMDB" id="EMD-21847"/>
<dbReference type="EMDB" id="EMD-21848"/>
<dbReference type="EMDB" id="EMD-21849"/>
<dbReference type="EMDB" id="EMD-26334"/>
<dbReference type="EMDB" id="EMD-26623"/>
<dbReference type="SMR" id="Q99437"/>
<dbReference type="BioGRID" id="107016">
    <property type="interactions" value="38"/>
</dbReference>
<dbReference type="ComplexPortal" id="CPX-2470">
    <property type="entry name" value="Vacuolar proton translocating ATPase complex, ATP6V0A1 variant"/>
</dbReference>
<dbReference type="ComplexPortal" id="CPX-6904">
    <property type="entry name" value="Vacuolar proton translocating ATPase complex, ATP6V0A2 variant"/>
</dbReference>
<dbReference type="ComplexPortal" id="CPX-6905">
    <property type="entry name" value="Vacuolar proton translocating ATPase complex, ATP6V0A3 variant"/>
</dbReference>
<dbReference type="ComplexPortal" id="CPX-6912">
    <property type="entry name" value="Vacuolar proton translocating ATPase complex, ATP6V0A4 variant"/>
</dbReference>
<dbReference type="FunCoup" id="Q99437">
    <property type="interactions" value="1295"/>
</dbReference>
<dbReference type="IntAct" id="Q99437">
    <property type="interactions" value="26"/>
</dbReference>
<dbReference type="MINT" id="Q99437"/>
<dbReference type="STRING" id="9606.ENSP00000434729"/>
<dbReference type="DrugBank" id="DB01133">
    <property type="generic name" value="Tiludronic acid"/>
</dbReference>
<dbReference type="iPTMnet" id="Q99437"/>
<dbReference type="PhosphoSitePlus" id="Q99437"/>
<dbReference type="BioMuta" id="ATP6V0B"/>
<dbReference type="DMDM" id="6136172"/>
<dbReference type="MassIVE" id="Q99437"/>
<dbReference type="PaxDb" id="9606-ENSP00000434729"/>
<dbReference type="PeptideAtlas" id="Q99437"/>
<dbReference type="Antibodypedia" id="32422">
    <property type="antibodies" value="87 antibodies from 18 providers"/>
</dbReference>
<dbReference type="DNASU" id="533"/>
<dbReference type="Ensembl" id="ENST00000236067.8">
    <molecule id="Q99437-2"/>
    <property type="protein sequence ID" value="ENSP00000236067.4"/>
    <property type="gene ID" value="ENSG00000117410.14"/>
</dbReference>
<dbReference type="Ensembl" id="ENST00000472174.7">
    <molecule id="Q99437-1"/>
    <property type="protein sequence ID" value="ENSP00000431605.1"/>
    <property type="gene ID" value="ENSG00000117410.14"/>
</dbReference>
<dbReference type="Ensembl" id="ENST00000498664.1">
    <molecule id="Q99437-2"/>
    <property type="protein sequence ID" value="ENSP00000434094.1"/>
    <property type="gene ID" value="ENSG00000117410.14"/>
</dbReference>
<dbReference type="GeneID" id="533"/>
<dbReference type="KEGG" id="hsa:533"/>
<dbReference type="MANE-Select" id="ENST00000472174.7">
    <property type="protein sequence ID" value="ENSP00000431605.1"/>
    <property type="RefSeq nucleotide sequence ID" value="NM_004047.5"/>
    <property type="RefSeq protein sequence ID" value="NP_004038.1"/>
</dbReference>
<dbReference type="UCSC" id="uc001cld.4">
    <molecule id="Q99437-1"/>
    <property type="organism name" value="human"/>
</dbReference>
<dbReference type="AGR" id="HGNC:861"/>
<dbReference type="CTD" id="533"/>
<dbReference type="DisGeNET" id="533"/>
<dbReference type="GeneCards" id="ATP6V0B"/>
<dbReference type="HGNC" id="HGNC:861">
    <property type="gene designation" value="ATP6V0B"/>
</dbReference>
<dbReference type="HPA" id="ENSG00000117410">
    <property type="expression patterns" value="Low tissue specificity"/>
</dbReference>
<dbReference type="MIM" id="603717">
    <property type="type" value="gene"/>
</dbReference>
<dbReference type="neXtProt" id="NX_Q99437"/>
<dbReference type="OpenTargets" id="ENSG00000117410"/>
<dbReference type="PharmGKB" id="PA25148"/>
<dbReference type="VEuPathDB" id="HostDB:ENSG00000117410"/>
<dbReference type="eggNOG" id="KOG0233">
    <property type="taxonomic scope" value="Eukaryota"/>
</dbReference>
<dbReference type="GeneTree" id="ENSGT00550000075120"/>
<dbReference type="HOGENOM" id="CLU_085752_0_0_1"/>
<dbReference type="InParanoid" id="Q99437"/>
<dbReference type="OMA" id="TSPYMWG"/>
<dbReference type="OrthoDB" id="10264021at2759"/>
<dbReference type="PAN-GO" id="Q99437">
    <property type="GO annotations" value="1 GO annotation based on evolutionary models"/>
</dbReference>
<dbReference type="PhylomeDB" id="Q99437"/>
<dbReference type="TreeFam" id="TF314946"/>
<dbReference type="BioCyc" id="MetaCyc:ENSG00000117410-MONOMER"/>
<dbReference type="PathwayCommons" id="Q99437"/>
<dbReference type="Reactome" id="R-HSA-1222556">
    <property type="pathway name" value="ROS and RNS production in phagocytes"/>
</dbReference>
<dbReference type="Reactome" id="R-HSA-77387">
    <property type="pathway name" value="Insulin receptor recycling"/>
</dbReference>
<dbReference type="Reactome" id="R-HSA-917977">
    <property type="pathway name" value="Transferrin endocytosis and recycling"/>
</dbReference>
<dbReference type="Reactome" id="R-HSA-9639288">
    <property type="pathway name" value="Amino acids regulate mTORC1"/>
</dbReference>
<dbReference type="Reactome" id="R-HSA-983712">
    <property type="pathway name" value="Ion channel transport"/>
</dbReference>
<dbReference type="Reactome" id="R-HSA-9857377">
    <property type="pathway name" value="Regulation of MITF-M-dependent genes involved in lysosome biogenesis and autophagy"/>
</dbReference>
<dbReference type="SignaLink" id="Q99437"/>
<dbReference type="SIGNOR" id="Q99437"/>
<dbReference type="BioGRID-ORCS" id="533">
    <property type="hits" value="711 hits in 1169 CRISPR screens"/>
</dbReference>
<dbReference type="ChiTaRS" id="ATP6V0B">
    <property type="organism name" value="human"/>
</dbReference>
<dbReference type="GeneWiki" id="ATP6V0B"/>
<dbReference type="GenomeRNAi" id="533"/>
<dbReference type="Pharos" id="Q99437">
    <property type="development level" value="Tbio"/>
</dbReference>
<dbReference type="PRO" id="PR:Q99437"/>
<dbReference type="Proteomes" id="UP000005640">
    <property type="component" value="Chromosome 1"/>
</dbReference>
<dbReference type="RNAct" id="Q99437">
    <property type="molecule type" value="protein"/>
</dbReference>
<dbReference type="Bgee" id="ENSG00000117410">
    <property type="expression patterns" value="Expressed in granulocyte and 202 other cell types or tissues"/>
</dbReference>
<dbReference type="ExpressionAtlas" id="Q99437">
    <property type="expression patterns" value="baseline and differential"/>
</dbReference>
<dbReference type="GO" id="GO:0030665">
    <property type="term" value="C:clathrin-coated vesicle membrane"/>
    <property type="evidence" value="ECO:0007669"/>
    <property type="project" value="UniProtKB-SubCell"/>
</dbReference>
<dbReference type="GO" id="GO:0010008">
    <property type="term" value="C:endosome membrane"/>
    <property type="evidence" value="ECO:0000304"/>
    <property type="project" value="Reactome"/>
</dbReference>
<dbReference type="GO" id="GO:0000139">
    <property type="term" value="C:Golgi membrane"/>
    <property type="evidence" value="ECO:0000303"/>
    <property type="project" value="ComplexPortal"/>
</dbReference>
<dbReference type="GO" id="GO:0005765">
    <property type="term" value="C:lysosomal membrane"/>
    <property type="evidence" value="ECO:0000304"/>
    <property type="project" value="Reactome"/>
</dbReference>
<dbReference type="GO" id="GO:0016020">
    <property type="term" value="C:membrane"/>
    <property type="evidence" value="ECO:0000314"/>
    <property type="project" value="ComplexPortal"/>
</dbReference>
<dbReference type="GO" id="GO:0030670">
    <property type="term" value="C:phagocytic vesicle membrane"/>
    <property type="evidence" value="ECO:0000304"/>
    <property type="project" value="Reactome"/>
</dbReference>
<dbReference type="GO" id="GO:0005886">
    <property type="term" value="C:plasma membrane"/>
    <property type="evidence" value="ECO:0000303"/>
    <property type="project" value="ComplexPortal"/>
</dbReference>
<dbReference type="GO" id="GO:0033176">
    <property type="term" value="C:proton-transporting V-type ATPase complex"/>
    <property type="evidence" value="ECO:0000303"/>
    <property type="project" value="ComplexPortal"/>
</dbReference>
<dbReference type="GO" id="GO:0000220">
    <property type="term" value="C:vacuolar proton-transporting V-type ATPase, V0 domain"/>
    <property type="evidence" value="ECO:0000250"/>
    <property type="project" value="UniProtKB"/>
</dbReference>
<dbReference type="GO" id="GO:0046961">
    <property type="term" value="F:proton-transporting ATPase activity, rotational mechanism"/>
    <property type="evidence" value="ECO:0000304"/>
    <property type="project" value="ProtInc"/>
</dbReference>
<dbReference type="GO" id="GO:0048388">
    <property type="term" value="P:endosomal lumen acidification"/>
    <property type="evidence" value="ECO:0000303"/>
    <property type="project" value="ComplexPortal"/>
</dbReference>
<dbReference type="GO" id="GO:0061795">
    <property type="term" value="P:Golgi lumen acidification"/>
    <property type="evidence" value="ECO:0000303"/>
    <property type="project" value="ComplexPortal"/>
</dbReference>
<dbReference type="GO" id="GO:0051452">
    <property type="term" value="P:intracellular pH reduction"/>
    <property type="evidence" value="ECO:0000303"/>
    <property type="project" value="ComplexPortal"/>
</dbReference>
<dbReference type="GO" id="GO:0007042">
    <property type="term" value="P:lysosomal lumen acidification"/>
    <property type="evidence" value="ECO:0000303"/>
    <property type="project" value="ComplexPortal"/>
</dbReference>
<dbReference type="GO" id="GO:1902600">
    <property type="term" value="P:proton transmembrane transport"/>
    <property type="evidence" value="ECO:0000304"/>
    <property type="project" value="ProtInc"/>
</dbReference>
<dbReference type="GO" id="GO:0016241">
    <property type="term" value="P:regulation of macroautophagy"/>
    <property type="evidence" value="ECO:0000303"/>
    <property type="project" value="ParkinsonsUK-UCL"/>
</dbReference>
<dbReference type="GO" id="GO:0007035">
    <property type="term" value="P:vacuolar acidification"/>
    <property type="evidence" value="ECO:0000303"/>
    <property type="project" value="ComplexPortal"/>
</dbReference>
<dbReference type="CDD" id="cd18177">
    <property type="entry name" value="ATP-synt_Vo_c_ATP6F_rpt1"/>
    <property type="match status" value="1"/>
</dbReference>
<dbReference type="CDD" id="cd18178">
    <property type="entry name" value="ATP-synt_Vo_c_ATP6F_rpt2"/>
    <property type="match status" value="1"/>
</dbReference>
<dbReference type="FunFam" id="1.20.120.610:FF:000002">
    <property type="entry name" value="V-type proton ATPase proteolipid subunit"/>
    <property type="match status" value="1"/>
</dbReference>
<dbReference type="Gene3D" id="1.20.120.610">
    <property type="entry name" value="lithium bound rotor ring of v- atpase"/>
    <property type="match status" value="1"/>
</dbReference>
<dbReference type="InterPro" id="IPR002379">
    <property type="entry name" value="ATPase_proteolipid_c-like_dom"/>
</dbReference>
<dbReference type="InterPro" id="IPR000245">
    <property type="entry name" value="ATPase_proteolipid_csu"/>
</dbReference>
<dbReference type="InterPro" id="IPR035921">
    <property type="entry name" value="F/V-ATP_Csub_sf"/>
</dbReference>
<dbReference type="PANTHER" id="PTHR10263">
    <property type="entry name" value="V-TYPE PROTON ATPASE PROTEOLIPID SUBUNIT"/>
    <property type="match status" value="1"/>
</dbReference>
<dbReference type="Pfam" id="PF00137">
    <property type="entry name" value="ATP-synt_C"/>
    <property type="match status" value="2"/>
</dbReference>
<dbReference type="PRINTS" id="PR00122">
    <property type="entry name" value="VACATPASE"/>
</dbReference>
<dbReference type="SUPFAM" id="SSF81333">
    <property type="entry name" value="F1F0 ATP synthase subunit C"/>
    <property type="match status" value="2"/>
</dbReference>
<comment type="function">
    <text evidence="1 5">Proton-conducting pore forming subunit of the V0 complex of vacuolar(H+)-ATPase (V-ATPase), a multisubunit enzyme composed of a peripheral complex (V1) that hydrolyzes ATP and a membrane integral complex (V0) that translocates protons (PubMed:33065002). V-ATPase is responsible for acidifying and maintaining the pH of intracellular compartments and in some cell types, is targeted to the plasma membrane, where it is responsible for acidifying the extracellular environment (By similarity).</text>
</comment>
<comment type="subunit">
    <text evidence="2 5">V-ATPase is a heteromultimeric enzyme made up of two complexes: the ATP-hydrolytic V1 complex and the proton translocation V0 complex (PubMed:33065002). The V1 complex consists of three catalytic AB heterodimers that form a heterohexamer, three peripheral stalks each consisting of EG heterodimers, one central rotor including subunits D and F, and the regulatory subunits C and H (PubMed:33065002). The proton translocation complex V0 consists of the proton transport subunit a, a ring of proteolipid subunits c9c'', rotary subunit d, subunits e and f, and the accessory subunits ATP6AP1/Ac45 and ATP6AP2/PRR (PubMed:33065002). Interacts with IFITM3 (By similarity). Interacts with TM4SF19; this interaction inhibits V1-V0 complex assembly (By similarity).</text>
</comment>
<comment type="interaction">
    <interactant intactId="EBI-3904417">
        <id>Q99437</id>
    </interactant>
    <interactant intactId="EBI-17979264">
        <id>Q86Y34</id>
        <label>ADGRG3</label>
    </interactant>
    <organismsDiffer>false</organismsDiffer>
    <experiments>3</experiments>
</comment>
<comment type="interaction">
    <interactant intactId="EBI-3904417">
        <id>Q99437</id>
    </interactant>
    <interactant intactId="EBI-715495">
        <id>P05090</id>
        <label>APOD</label>
    </interactant>
    <organismsDiffer>false</organismsDiffer>
    <experiments>3</experiments>
</comment>
<comment type="interaction">
    <interactant intactId="EBI-3904417">
        <id>Q99437</id>
    </interactant>
    <interactant intactId="EBI-12211159">
        <id>P29400-2</id>
        <label>COL4A5</label>
    </interactant>
    <organismsDiffer>false</organismsDiffer>
    <experiments>3</experiments>
</comment>
<comment type="interaction">
    <interactant intactId="EBI-3904417">
        <id>Q99437</id>
    </interactant>
    <interactant intactId="EBI-4319440">
        <id>P54849</id>
        <label>EMP1</label>
    </interactant>
    <organismsDiffer>false</organismsDiffer>
    <experiments>3</experiments>
</comment>
<comment type="interaction">
    <interactant intactId="EBI-3904417">
        <id>Q99437</id>
    </interactant>
    <interactant intactId="EBI-18938272">
        <id>Q96KR6</id>
        <label>FAM210B</label>
    </interactant>
    <organismsDiffer>false</organismsDiffer>
    <experiments>3</experiments>
</comment>
<comment type="interaction">
    <interactant intactId="EBI-3904417">
        <id>Q99437</id>
    </interactant>
    <interactant intactId="EBI-17458373">
        <id>P48165</id>
        <label>GJA8</label>
    </interactant>
    <organismsDiffer>false</organismsDiffer>
    <experiments>3</experiments>
</comment>
<comment type="interaction">
    <interactant intactId="EBI-3904417">
        <id>Q99437</id>
    </interactant>
    <interactant intactId="EBI-18076404">
        <id>O15529</id>
        <label>GPR42</label>
    </interactant>
    <organismsDiffer>false</organismsDiffer>
    <experiments>3</experiments>
</comment>
<comment type="interaction">
    <interactant intactId="EBI-3904417">
        <id>Q99437</id>
    </interactant>
    <interactant intactId="EBI-12808020">
        <id>Q9BZJ8</id>
        <label>GPR61</label>
    </interactant>
    <organismsDiffer>false</organismsDiffer>
    <experiments>3</experiments>
</comment>
<comment type="interaction">
    <interactant intactId="EBI-3904417">
        <id>Q99437</id>
    </interactant>
    <interactant intactId="EBI-8503746">
        <id>Q9Y5U4</id>
        <label>INSIG2</label>
    </interactant>
    <organismsDiffer>false</organismsDiffer>
    <experiments>3</experiments>
</comment>
<comment type="interaction">
    <interactant intactId="EBI-3904417">
        <id>Q99437</id>
    </interactant>
    <interactant intactId="EBI-9018187">
        <id>P26715</id>
        <label>KLRC1</label>
    </interactant>
    <organismsDiffer>false</organismsDiffer>
    <experiments>3</experiments>
</comment>
<comment type="interaction">
    <interactant intactId="EBI-3904417">
        <id>Q99437</id>
    </interactant>
    <interactant intactId="EBI-11956541">
        <id>Q9GZY8-5</id>
        <label>MFF</label>
    </interactant>
    <organismsDiffer>false</organismsDiffer>
    <experiments>3</experiments>
</comment>
<comment type="interaction">
    <interactant intactId="EBI-3904417">
        <id>Q99437</id>
    </interactant>
    <interactant intactId="EBI-8449636">
        <id>P30301</id>
        <label>MIP</label>
    </interactant>
    <organismsDiffer>false</organismsDiffer>
    <experiments>3</experiments>
</comment>
<comment type="interaction">
    <interactant intactId="EBI-3904417">
        <id>Q99437</id>
    </interactant>
    <interactant intactId="EBI-12806656">
        <id>Q96HJ5</id>
        <label>MS4A3</label>
    </interactant>
    <organismsDiffer>false</organismsDiffer>
    <experiments>5</experiments>
</comment>
<comment type="interaction">
    <interactant intactId="EBI-3904417">
        <id>Q99437</id>
    </interactant>
    <interactant intactId="EBI-10262547">
        <id>Q8IXM6</id>
        <label>NRM</label>
    </interactant>
    <organismsDiffer>false</organismsDiffer>
    <experiments>3</experiments>
</comment>
<comment type="interaction">
    <interactant intactId="EBI-3904417">
        <id>Q99437</id>
    </interactant>
    <interactant intactId="EBI-3923031">
        <id>Q14973</id>
        <label>SLC10A1</label>
    </interactant>
    <organismsDiffer>false</organismsDiffer>
    <experiments>3</experiments>
</comment>
<comment type="interaction">
    <interactant intactId="EBI-3904417">
        <id>Q99437</id>
    </interactant>
    <interactant intactId="EBI-2825135">
        <id>P22732</id>
        <label>SLC2A5</label>
    </interactant>
    <organismsDiffer>false</organismsDiffer>
    <experiments>3</experiments>
</comment>
<comment type="interaction">
    <interactant intactId="EBI-3904417">
        <id>Q99437</id>
    </interactant>
    <interactant intactId="EBI-17498703">
        <id>Q9HBV2</id>
        <label>SPACA1</label>
    </interactant>
    <organismsDiffer>false</organismsDiffer>
    <experiments>3</experiments>
</comment>
<comment type="interaction">
    <interactant intactId="EBI-3904417">
        <id>Q99437</id>
    </interactant>
    <interactant intactId="EBI-1211440">
        <id>P27105</id>
        <label>STOM</label>
    </interactant>
    <organismsDiffer>false</organismsDiffer>
    <experiments>3</experiments>
</comment>
<comment type="interaction">
    <interactant intactId="EBI-3904417">
        <id>Q99437</id>
    </interactant>
    <interactant intactId="EBI-6448756">
        <id>Q96DZ7</id>
        <label>TM4SF19</label>
    </interactant>
    <organismsDiffer>false</organismsDiffer>
    <experiments>3</experiments>
</comment>
<comment type="interaction">
    <interactant intactId="EBI-3904417">
        <id>Q99437</id>
    </interactant>
    <interactant intactId="EBI-10315004">
        <id>Q9NWH2</id>
        <label>TMEM242</label>
    </interactant>
    <organismsDiffer>false</organismsDiffer>
    <experiments>3</experiments>
</comment>
<comment type="interaction">
    <interactant intactId="EBI-3904417">
        <id>Q99437</id>
    </interactant>
    <interactant intactId="EBI-1055364">
        <id>Q3ZAQ7</id>
        <label>VMA21</label>
    </interactant>
    <organismsDiffer>false</organismsDiffer>
    <experiments>3</experiments>
</comment>
<comment type="subcellular location">
    <subcellularLocation>
        <location evidence="1">Cytoplasmic vesicle</location>
        <location evidence="1">Clathrin-coated vesicle membrane</location>
        <topology evidence="3">Multi-pass membrane protein</topology>
    </subcellularLocation>
</comment>
<comment type="alternative products">
    <event type="alternative splicing"/>
    <isoform>
        <id>Q99437-1</id>
        <name>1</name>
        <sequence type="displayed"/>
    </isoform>
    <isoform>
        <id>Q99437-2</id>
        <name>2</name>
        <sequence type="described" ref="VSP_046288"/>
    </isoform>
</comment>
<comment type="tissue specificity">
    <text>Ubiquitous.</text>
</comment>
<comment type="similarity">
    <text evidence="6">Belongs to the V-ATPase proteolipid subunit family.</text>
</comment>
<proteinExistence type="evidence at protein level"/>
<organism>
    <name type="scientific">Homo sapiens</name>
    <name type="common">Human</name>
    <dbReference type="NCBI Taxonomy" id="9606"/>
    <lineage>
        <taxon>Eukaryota</taxon>
        <taxon>Metazoa</taxon>
        <taxon>Chordata</taxon>
        <taxon>Craniata</taxon>
        <taxon>Vertebrata</taxon>
        <taxon>Euteleostomi</taxon>
        <taxon>Mammalia</taxon>
        <taxon>Eutheria</taxon>
        <taxon>Euarchontoglires</taxon>
        <taxon>Primates</taxon>
        <taxon>Haplorrhini</taxon>
        <taxon>Catarrhini</taxon>
        <taxon>Hominidae</taxon>
        <taxon>Homo</taxon>
    </lineage>
</organism>
<evidence type="ECO:0000250" key="1">
    <source>
        <dbReference type="UniProtKB" id="Q2TA24"/>
    </source>
</evidence>
<evidence type="ECO:0000250" key="2">
    <source>
        <dbReference type="UniProtKB" id="Q91V37"/>
    </source>
</evidence>
<evidence type="ECO:0000255" key="3"/>
<evidence type="ECO:0000269" key="4">
    <source>
    </source>
</evidence>
<evidence type="ECO:0000269" key="5">
    <source>
    </source>
</evidence>
<evidence type="ECO:0000305" key="6"/>
<evidence type="ECO:0007744" key="7">
    <source>
        <dbReference type="PDB" id="6WLW"/>
    </source>
</evidence>
<evidence type="ECO:0007744" key="8">
    <source>
        <dbReference type="PDB" id="6WM2"/>
    </source>
</evidence>
<evidence type="ECO:0007744" key="9">
    <source>
        <dbReference type="PDB" id="6WM3"/>
    </source>
</evidence>
<evidence type="ECO:0007744" key="10">
    <source>
        <dbReference type="PDB" id="6WM4"/>
    </source>
</evidence>
<evidence type="ECO:0007829" key="11">
    <source>
        <dbReference type="PDB" id="6WLW"/>
    </source>
</evidence>
<sequence length="205" mass="21406">MTGLALLYSGVFVAFWACALAVGVCYTIFDLGFRFDVAWFLTETSPFMWSNLGIGLAISLSVVGAAWGIYITGSSIIGGGVKAPRIKTKNLVSIIFCEAVAIYGIIMAIVISNMAEPFSATDPKAIGHRNYHAGYSMFGAGLTVGLSNLFCGVCVGIVGSGAALADAQNPSLFVKILIVEIFGSAIGLFGVIVAILQTSRVKMGD</sequence>
<reference key="1">
    <citation type="journal article" date="1998" name="Genomics">
        <title>Identification and characterization of the gene encoding a second proteolipid subunit of human vacuolar H(+)-ATPase (ATP6F).</title>
        <authorList>
            <person name="Nishigori H."/>
            <person name="Yamada S."/>
            <person name="Tomura H."/>
            <person name="Fernald A.A."/>
            <person name="le Beau M.M."/>
            <person name="Takeuchi T."/>
            <person name="Takeda J."/>
        </authorList>
    </citation>
    <scope>NUCLEOTIDE SEQUENCE [MRNA] (ISOFORM 1)</scope>
    <source>
        <tissue>Kidney</tissue>
    </source>
</reference>
<reference key="2">
    <citation type="submission" date="2003-05" db="EMBL/GenBank/DDBJ databases">
        <title>Cloning of human full-length CDSs in BD Creator(TM) system donor vector.</title>
        <authorList>
            <person name="Kalnine N."/>
            <person name="Chen X."/>
            <person name="Rolfs A."/>
            <person name="Halleck A."/>
            <person name="Hines L."/>
            <person name="Eisenstein S."/>
            <person name="Koundinya M."/>
            <person name="Raphael J."/>
            <person name="Moreira D."/>
            <person name="Kelley T."/>
            <person name="LaBaer J."/>
            <person name="Lin Y."/>
            <person name="Phelan M."/>
            <person name="Farmer A."/>
        </authorList>
    </citation>
    <scope>NUCLEOTIDE SEQUENCE [LARGE SCALE MRNA] (ISOFORM 1)</scope>
</reference>
<reference key="3">
    <citation type="submission" date="2004-06" db="EMBL/GenBank/DDBJ databases">
        <title>Cloning of human full open reading frames in Gateway(TM) system entry vector (pDONR201).</title>
        <authorList>
            <person name="Ebert L."/>
            <person name="Schick M."/>
            <person name="Neubert P."/>
            <person name="Schatten R."/>
            <person name="Henze S."/>
            <person name="Korn B."/>
        </authorList>
    </citation>
    <scope>NUCLEOTIDE SEQUENCE [LARGE SCALE MRNA] (ISOFORM 1)</scope>
</reference>
<reference key="4">
    <citation type="journal article" date="2006" name="Nature">
        <title>The DNA sequence and biological annotation of human chromosome 1.</title>
        <authorList>
            <person name="Gregory S.G."/>
            <person name="Barlow K.F."/>
            <person name="McLay K.E."/>
            <person name="Kaul R."/>
            <person name="Swarbreck D."/>
            <person name="Dunham A."/>
            <person name="Scott C.E."/>
            <person name="Howe K.L."/>
            <person name="Woodfine K."/>
            <person name="Spencer C.C.A."/>
            <person name="Jones M.C."/>
            <person name="Gillson C."/>
            <person name="Searle S."/>
            <person name="Zhou Y."/>
            <person name="Kokocinski F."/>
            <person name="McDonald L."/>
            <person name="Evans R."/>
            <person name="Phillips K."/>
            <person name="Atkinson A."/>
            <person name="Cooper R."/>
            <person name="Jones C."/>
            <person name="Hall R.E."/>
            <person name="Andrews T.D."/>
            <person name="Lloyd C."/>
            <person name="Ainscough R."/>
            <person name="Almeida J.P."/>
            <person name="Ambrose K.D."/>
            <person name="Anderson F."/>
            <person name="Andrew R.W."/>
            <person name="Ashwell R.I.S."/>
            <person name="Aubin K."/>
            <person name="Babbage A.K."/>
            <person name="Bagguley C.L."/>
            <person name="Bailey J."/>
            <person name="Beasley H."/>
            <person name="Bethel G."/>
            <person name="Bird C.P."/>
            <person name="Bray-Allen S."/>
            <person name="Brown J.Y."/>
            <person name="Brown A.J."/>
            <person name="Buckley D."/>
            <person name="Burton J."/>
            <person name="Bye J."/>
            <person name="Carder C."/>
            <person name="Chapman J.C."/>
            <person name="Clark S.Y."/>
            <person name="Clarke G."/>
            <person name="Clee C."/>
            <person name="Cobley V."/>
            <person name="Collier R.E."/>
            <person name="Corby N."/>
            <person name="Coville G.J."/>
            <person name="Davies J."/>
            <person name="Deadman R."/>
            <person name="Dunn M."/>
            <person name="Earthrowl M."/>
            <person name="Ellington A.G."/>
            <person name="Errington H."/>
            <person name="Frankish A."/>
            <person name="Frankland J."/>
            <person name="French L."/>
            <person name="Garner P."/>
            <person name="Garnett J."/>
            <person name="Gay L."/>
            <person name="Ghori M.R.J."/>
            <person name="Gibson R."/>
            <person name="Gilby L.M."/>
            <person name="Gillett W."/>
            <person name="Glithero R.J."/>
            <person name="Grafham D.V."/>
            <person name="Griffiths C."/>
            <person name="Griffiths-Jones S."/>
            <person name="Grocock R."/>
            <person name="Hammond S."/>
            <person name="Harrison E.S.I."/>
            <person name="Hart E."/>
            <person name="Haugen E."/>
            <person name="Heath P.D."/>
            <person name="Holmes S."/>
            <person name="Holt K."/>
            <person name="Howden P.J."/>
            <person name="Hunt A.R."/>
            <person name="Hunt S.E."/>
            <person name="Hunter G."/>
            <person name="Isherwood J."/>
            <person name="James R."/>
            <person name="Johnson C."/>
            <person name="Johnson D."/>
            <person name="Joy A."/>
            <person name="Kay M."/>
            <person name="Kershaw J.K."/>
            <person name="Kibukawa M."/>
            <person name="Kimberley A.M."/>
            <person name="King A."/>
            <person name="Knights A.J."/>
            <person name="Lad H."/>
            <person name="Laird G."/>
            <person name="Lawlor S."/>
            <person name="Leongamornlert D.A."/>
            <person name="Lloyd D.M."/>
            <person name="Loveland J."/>
            <person name="Lovell J."/>
            <person name="Lush M.J."/>
            <person name="Lyne R."/>
            <person name="Martin S."/>
            <person name="Mashreghi-Mohammadi M."/>
            <person name="Matthews L."/>
            <person name="Matthews N.S.W."/>
            <person name="McLaren S."/>
            <person name="Milne S."/>
            <person name="Mistry S."/>
            <person name="Moore M.J.F."/>
            <person name="Nickerson T."/>
            <person name="O'Dell C.N."/>
            <person name="Oliver K."/>
            <person name="Palmeiri A."/>
            <person name="Palmer S.A."/>
            <person name="Parker A."/>
            <person name="Patel D."/>
            <person name="Pearce A.V."/>
            <person name="Peck A.I."/>
            <person name="Pelan S."/>
            <person name="Phelps K."/>
            <person name="Phillimore B.J."/>
            <person name="Plumb R."/>
            <person name="Rajan J."/>
            <person name="Raymond C."/>
            <person name="Rouse G."/>
            <person name="Saenphimmachak C."/>
            <person name="Sehra H.K."/>
            <person name="Sheridan E."/>
            <person name="Shownkeen R."/>
            <person name="Sims S."/>
            <person name="Skuce C.D."/>
            <person name="Smith M."/>
            <person name="Steward C."/>
            <person name="Subramanian S."/>
            <person name="Sycamore N."/>
            <person name="Tracey A."/>
            <person name="Tromans A."/>
            <person name="Van Helmond Z."/>
            <person name="Wall M."/>
            <person name="Wallis J.M."/>
            <person name="White S."/>
            <person name="Whitehead S.L."/>
            <person name="Wilkinson J.E."/>
            <person name="Willey D.L."/>
            <person name="Williams H."/>
            <person name="Wilming L."/>
            <person name="Wray P.W."/>
            <person name="Wu Z."/>
            <person name="Coulson A."/>
            <person name="Vaudin M."/>
            <person name="Sulston J.E."/>
            <person name="Durbin R.M."/>
            <person name="Hubbard T."/>
            <person name="Wooster R."/>
            <person name="Dunham I."/>
            <person name="Carter N.P."/>
            <person name="McVean G."/>
            <person name="Ross M.T."/>
            <person name="Harrow J."/>
            <person name="Olson M.V."/>
            <person name="Beck S."/>
            <person name="Rogers J."/>
            <person name="Bentley D.R."/>
        </authorList>
    </citation>
    <scope>NUCLEOTIDE SEQUENCE [LARGE SCALE GENOMIC DNA]</scope>
</reference>
<reference key="5">
    <citation type="submission" date="2005-09" db="EMBL/GenBank/DDBJ databases">
        <authorList>
            <person name="Mural R.J."/>
            <person name="Istrail S."/>
            <person name="Sutton G."/>
            <person name="Florea L."/>
            <person name="Halpern A.L."/>
            <person name="Mobarry C.M."/>
            <person name="Lippert R."/>
            <person name="Walenz B."/>
            <person name="Shatkay H."/>
            <person name="Dew I."/>
            <person name="Miller J.R."/>
            <person name="Flanigan M.J."/>
            <person name="Edwards N.J."/>
            <person name="Bolanos R."/>
            <person name="Fasulo D."/>
            <person name="Halldorsson B.V."/>
            <person name="Hannenhalli S."/>
            <person name="Turner R."/>
            <person name="Yooseph S."/>
            <person name="Lu F."/>
            <person name="Nusskern D.R."/>
            <person name="Shue B.C."/>
            <person name="Zheng X.H."/>
            <person name="Zhong F."/>
            <person name="Delcher A.L."/>
            <person name="Huson D.H."/>
            <person name="Kravitz S.A."/>
            <person name="Mouchard L."/>
            <person name="Reinert K."/>
            <person name="Remington K.A."/>
            <person name="Clark A.G."/>
            <person name="Waterman M.S."/>
            <person name="Eichler E.E."/>
            <person name="Adams M.D."/>
            <person name="Hunkapiller M.W."/>
            <person name="Myers E.W."/>
            <person name="Venter J.C."/>
        </authorList>
    </citation>
    <scope>NUCLEOTIDE SEQUENCE [LARGE SCALE GENOMIC DNA]</scope>
</reference>
<reference key="6">
    <citation type="journal article" date="2004" name="Genome Res.">
        <title>The status, quality, and expansion of the NIH full-length cDNA project: the Mammalian Gene Collection (MGC).</title>
        <authorList>
            <consortium name="The MGC Project Team"/>
        </authorList>
    </citation>
    <scope>NUCLEOTIDE SEQUENCE [LARGE SCALE MRNA] (ISOFORM 1)</scope>
    <source>
        <tissue>Muscle</tissue>
    </source>
</reference>
<reference evidence="7 8 9 10" key="7">
    <citation type="journal article" date="2020" name="Mol. Cell">
        <title>Structures of a Complete Human V-ATPase Reveal Mechanisms of Its Assembly.</title>
        <authorList>
            <person name="Wang L."/>
            <person name="Wu D."/>
            <person name="Robinson C.V."/>
            <person name="Wu H."/>
            <person name="Fu T.M."/>
        </authorList>
    </citation>
    <scope>STRUCTURE BY ELECTRON MICROSCOPY (3.00 ANGSTROMS)</scope>
    <scope>FUNCTION</scope>
    <scope>IDENTIFICATION IN THE V-ATPASE COMPLEX</scope>
</reference>
<reference key="8">
    <citation type="journal article" date="2006" name="Science">
        <title>The consensus coding sequences of human breast and colorectal cancers.</title>
        <authorList>
            <person name="Sjoeblom T."/>
            <person name="Jones S."/>
            <person name="Wood L.D."/>
            <person name="Parsons D.W."/>
            <person name="Lin J."/>
            <person name="Barber T.D."/>
            <person name="Mandelker D."/>
            <person name="Leary R.J."/>
            <person name="Ptak J."/>
            <person name="Silliman N."/>
            <person name="Szabo S."/>
            <person name="Buckhaults P."/>
            <person name="Farrell C."/>
            <person name="Meeh P."/>
            <person name="Markowitz S.D."/>
            <person name="Willis J."/>
            <person name="Dawson D."/>
            <person name="Willson J.K.V."/>
            <person name="Gazdar A.F."/>
            <person name="Hartigan J."/>
            <person name="Wu L."/>
            <person name="Liu C."/>
            <person name="Parmigiani G."/>
            <person name="Park B.H."/>
            <person name="Bachman K.E."/>
            <person name="Papadopoulos N."/>
            <person name="Vogelstein B."/>
            <person name="Kinzler K.W."/>
            <person name="Velculescu V.E."/>
        </authorList>
    </citation>
    <scope>VARIANT [LARGE SCALE ANALYSIS] MET-155</scope>
</reference>
<feature type="chain" id="PRO_0000071777" description="V-type proton ATPase 21 kDa proteolipid subunit c''">
    <location>
        <begin position="1"/>
        <end position="205"/>
    </location>
</feature>
<feature type="topological domain" description="Lumenal" evidence="3">
    <location>
        <begin position="1"/>
        <end position="3"/>
    </location>
</feature>
<feature type="transmembrane region" description="Helical" evidence="3">
    <location>
        <begin position="4"/>
        <end position="24"/>
    </location>
</feature>
<feature type="topological domain" description="Cytoplasmic" evidence="3">
    <location>
        <begin position="25"/>
        <end position="51"/>
    </location>
</feature>
<feature type="transmembrane region" description="Helical" evidence="3">
    <location>
        <begin position="52"/>
        <end position="72"/>
    </location>
</feature>
<feature type="topological domain" description="Lumenal" evidence="3">
    <location>
        <begin position="73"/>
        <end position="90"/>
    </location>
</feature>
<feature type="transmembrane region" description="Helical" evidence="3">
    <location>
        <begin position="91"/>
        <end position="111"/>
    </location>
</feature>
<feature type="topological domain" description="Cytoplasmic" evidence="3">
    <location>
        <begin position="112"/>
        <end position="137"/>
    </location>
</feature>
<feature type="transmembrane region" description="Helical" evidence="3">
    <location>
        <begin position="138"/>
        <end position="158"/>
    </location>
</feature>
<feature type="topological domain" description="Lumenal" evidence="3">
    <location>
        <begin position="159"/>
        <end position="175"/>
    </location>
</feature>
<feature type="transmembrane region" description="Helical" evidence="3">
    <location>
        <begin position="176"/>
        <end position="196"/>
    </location>
</feature>
<feature type="topological domain" description="Cytoplasmic" evidence="3">
    <location>
        <begin position="197"/>
        <end position="205"/>
    </location>
</feature>
<feature type="site" description="Essential for proton translocation" evidence="1">
    <location>
        <position position="98"/>
    </location>
</feature>
<feature type="splice variant" id="VSP_046288" description="In isoform 2." evidence="6">
    <location>
        <begin position="1"/>
        <end position="47"/>
    </location>
</feature>
<feature type="sequence variant" id="VAR_035703" description="In a breast cancer sample; somatic mutation; dbSNP:rs373883976." evidence="4">
    <original>V</original>
    <variation>M</variation>
    <location>
        <position position="155"/>
    </location>
</feature>
<feature type="helix" evidence="11">
    <location>
        <begin position="3"/>
        <end position="28"/>
    </location>
</feature>
<feature type="helix" evidence="11">
    <location>
        <begin position="32"/>
        <end position="34"/>
    </location>
</feature>
<feature type="helix" evidence="11">
    <location>
        <begin position="37"/>
        <end position="43"/>
    </location>
</feature>
<feature type="helix" evidence="11">
    <location>
        <begin position="46"/>
        <end position="79"/>
    </location>
</feature>
<feature type="helix" evidence="11">
    <location>
        <begin position="86"/>
        <end position="89"/>
    </location>
</feature>
<feature type="helix" evidence="11">
    <location>
        <begin position="91"/>
        <end position="111"/>
    </location>
</feature>
<feature type="helix" evidence="11">
    <location>
        <begin position="123"/>
        <end position="168"/>
    </location>
</feature>
<feature type="helix" evidence="11">
    <location>
        <begin position="170"/>
        <end position="172"/>
    </location>
</feature>
<feature type="helix" evidence="11">
    <location>
        <begin position="173"/>
        <end position="197"/>
    </location>
</feature>
<protein>
    <recommendedName>
        <fullName evidence="6">V-type proton ATPase 21 kDa proteolipid subunit c''</fullName>
        <shortName evidence="6">V-ATPase 21 kDa proteolipid subunit c''</shortName>
    </recommendedName>
    <alternativeName>
        <fullName evidence="6">Vacuolar proton pump 21 kDa proteolipid subunit c''</fullName>
    </alternativeName>
    <alternativeName>
        <fullName>hATPL</fullName>
    </alternativeName>
</protein>
<name>VATO_HUMAN</name>
<gene>
    <name type="primary">ATP6V0B</name>
    <name type="synonym">ATP6F</name>
</gene>
<keyword id="KW-0002">3D-structure</keyword>
<keyword id="KW-0025">Alternative splicing</keyword>
<keyword id="KW-0968">Cytoplasmic vesicle</keyword>
<keyword id="KW-0375">Hydrogen ion transport</keyword>
<keyword id="KW-0406">Ion transport</keyword>
<keyword id="KW-0472">Membrane</keyword>
<keyword id="KW-1267">Proteomics identification</keyword>
<keyword id="KW-1185">Reference proteome</keyword>
<keyword id="KW-0812">Transmembrane</keyword>
<keyword id="KW-1133">Transmembrane helix</keyword>
<keyword id="KW-0813">Transport</keyword>